<organism>
    <name type="scientific">Arabidopsis thaliana</name>
    <name type="common">Mouse-ear cress</name>
    <dbReference type="NCBI Taxonomy" id="3702"/>
    <lineage>
        <taxon>Eukaryota</taxon>
        <taxon>Viridiplantae</taxon>
        <taxon>Streptophyta</taxon>
        <taxon>Embryophyta</taxon>
        <taxon>Tracheophyta</taxon>
        <taxon>Spermatophyta</taxon>
        <taxon>Magnoliopsida</taxon>
        <taxon>eudicotyledons</taxon>
        <taxon>Gunneridae</taxon>
        <taxon>Pentapetalae</taxon>
        <taxon>rosids</taxon>
        <taxon>malvids</taxon>
        <taxon>Brassicales</taxon>
        <taxon>Brassicaceae</taxon>
        <taxon>Camelineae</taxon>
        <taxon>Arabidopsis</taxon>
    </lineage>
</organism>
<gene>
    <name type="ordered locus">At5g45780</name>
    <name type="ORF">MRA19.22</name>
</gene>
<dbReference type="EC" id="2.7.11.1"/>
<dbReference type="EMBL" id="AB012245">
    <property type="protein sequence ID" value="BAB09221.1"/>
    <property type="status" value="ALT_SEQ"/>
    <property type="molecule type" value="Genomic_DNA"/>
</dbReference>
<dbReference type="EMBL" id="CP002688">
    <property type="protein sequence ID" value="AED95298.1"/>
    <property type="molecule type" value="Genomic_DNA"/>
</dbReference>
<dbReference type="EMBL" id="FJ708789">
    <property type="protein sequence ID" value="ACN59380.1"/>
    <property type="molecule type" value="mRNA"/>
</dbReference>
<dbReference type="RefSeq" id="NP_199390.2">
    <property type="nucleotide sequence ID" value="NM_123946.4"/>
</dbReference>
<dbReference type="SMR" id="C0LGU5"/>
<dbReference type="BioGRID" id="19867">
    <property type="interactions" value="82"/>
</dbReference>
<dbReference type="FunCoup" id="C0LGU5">
    <property type="interactions" value="325"/>
</dbReference>
<dbReference type="IntAct" id="C0LGU5">
    <property type="interactions" value="90"/>
</dbReference>
<dbReference type="STRING" id="3702.C0LGU5"/>
<dbReference type="GlyGen" id="C0LGU5">
    <property type="glycosylation" value="4 sites"/>
</dbReference>
<dbReference type="PaxDb" id="3702-AT5G45780.1"/>
<dbReference type="ProteomicsDB" id="243019"/>
<dbReference type="EnsemblPlants" id="AT5G45780.1">
    <property type="protein sequence ID" value="AT5G45780.1"/>
    <property type="gene ID" value="AT5G45780"/>
</dbReference>
<dbReference type="GeneID" id="834618"/>
<dbReference type="Gramene" id="AT5G45780.1">
    <property type="protein sequence ID" value="AT5G45780.1"/>
    <property type="gene ID" value="AT5G45780"/>
</dbReference>
<dbReference type="KEGG" id="ath:AT5G45780"/>
<dbReference type="Araport" id="AT5G45780"/>
<dbReference type="TAIR" id="AT5G45780">
    <property type="gene designation" value="CIK4"/>
</dbReference>
<dbReference type="eggNOG" id="ENOG502QU0U">
    <property type="taxonomic scope" value="Eukaryota"/>
</dbReference>
<dbReference type="HOGENOM" id="CLU_000288_92_7_1"/>
<dbReference type="InParanoid" id="C0LGU5"/>
<dbReference type="OrthoDB" id="4062651at2759"/>
<dbReference type="PhylomeDB" id="C0LGU5"/>
<dbReference type="PRO" id="PR:C0LGU5"/>
<dbReference type="Proteomes" id="UP000006548">
    <property type="component" value="Chromosome 5"/>
</dbReference>
<dbReference type="ExpressionAtlas" id="C0LGU5">
    <property type="expression patterns" value="baseline and differential"/>
</dbReference>
<dbReference type="GO" id="GO:0016020">
    <property type="term" value="C:membrane"/>
    <property type="evidence" value="ECO:0007669"/>
    <property type="project" value="UniProtKB-SubCell"/>
</dbReference>
<dbReference type="GO" id="GO:0005524">
    <property type="term" value="F:ATP binding"/>
    <property type="evidence" value="ECO:0007669"/>
    <property type="project" value="UniProtKB-KW"/>
</dbReference>
<dbReference type="GO" id="GO:0015026">
    <property type="term" value="F:coreceptor activity"/>
    <property type="evidence" value="ECO:0000316"/>
    <property type="project" value="TAIR"/>
</dbReference>
<dbReference type="GO" id="GO:0106310">
    <property type="term" value="F:protein serine kinase activity"/>
    <property type="evidence" value="ECO:0007669"/>
    <property type="project" value="RHEA"/>
</dbReference>
<dbReference type="GO" id="GO:0004674">
    <property type="term" value="F:protein serine/threonine kinase activity"/>
    <property type="evidence" value="ECO:0007669"/>
    <property type="project" value="UniProtKB-KW"/>
</dbReference>
<dbReference type="GO" id="GO:0048653">
    <property type="term" value="P:anther development"/>
    <property type="evidence" value="ECO:0000316"/>
    <property type="project" value="TAIR"/>
</dbReference>
<dbReference type="GO" id="GO:0007639">
    <property type="term" value="P:homeostasis of number of meristem cells"/>
    <property type="evidence" value="ECO:0000316"/>
    <property type="project" value="TAIR"/>
</dbReference>
<dbReference type="FunFam" id="3.80.10.10:FF:000021">
    <property type="entry name" value="Putative LRR receptor-like serine/threonine-protein kinase"/>
    <property type="match status" value="1"/>
</dbReference>
<dbReference type="FunFam" id="3.30.200.20:FF:000015">
    <property type="entry name" value="Somatic embryogenesis receptor kinase 1"/>
    <property type="match status" value="1"/>
</dbReference>
<dbReference type="FunFam" id="1.10.510.10:FF:000016">
    <property type="entry name" value="Somatic embryogenesis receptor-like kinase 1"/>
    <property type="match status" value="1"/>
</dbReference>
<dbReference type="Gene3D" id="3.30.200.20">
    <property type="entry name" value="Phosphorylase Kinase, domain 1"/>
    <property type="match status" value="1"/>
</dbReference>
<dbReference type="Gene3D" id="3.80.10.10">
    <property type="entry name" value="Ribonuclease Inhibitor"/>
    <property type="match status" value="1"/>
</dbReference>
<dbReference type="Gene3D" id="1.10.510.10">
    <property type="entry name" value="Transferase(Phosphotransferase) domain 1"/>
    <property type="match status" value="1"/>
</dbReference>
<dbReference type="InterPro" id="IPR011009">
    <property type="entry name" value="Kinase-like_dom_sf"/>
</dbReference>
<dbReference type="InterPro" id="IPR001611">
    <property type="entry name" value="Leu-rich_rpt"/>
</dbReference>
<dbReference type="InterPro" id="IPR032675">
    <property type="entry name" value="LRR_dom_sf"/>
</dbReference>
<dbReference type="InterPro" id="IPR013210">
    <property type="entry name" value="LRR_N_plant-typ"/>
</dbReference>
<dbReference type="InterPro" id="IPR051824">
    <property type="entry name" value="LRR_Rcpt-Like_S/T_Kinase"/>
</dbReference>
<dbReference type="InterPro" id="IPR000719">
    <property type="entry name" value="Prot_kinase_dom"/>
</dbReference>
<dbReference type="InterPro" id="IPR017441">
    <property type="entry name" value="Protein_kinase_ATP_BS"/>
</dbReference>
<dbReference type="InterPro" id="IPR001245">
    <property type="entry name" value="Ser-Thr/Tyr_kinase_cat_dom"/>
</dbReference>
<dbReference type="InterPro" id="IPR008271">
    <property type="entry name" value="Ser/Thr_kinase_AS"/>
</dbReference>
<dbReference type="PANTHER" id="PTHR48006">
    <property type="entry name" value="LEUCINE-RICH REPEAT-CONTAINING PROTEIN DDB_G0281931-RELATED"/>
    <property type="match status" value="1"/>
</dbReference>
<dbReference type="PANTHER" id="PTHR48006:SF90">
    <property type="entry name" value="PROTEIN KINASE DOMAIN-CONTAINING PROTEIN"/>
    <property type="match status" value="1"/>
</dbReference>
<dbReference type="Pfam" id="PF00560">
    <property type="entry name" value="LRR_1"/>
    <property type="match status" value="3"/>
</dbReference>
<dbReference type="Pfam" id="PF08263">
    <property type="entry name" value="LRRNT_2"/>
    <property type="match status" value="1"/>
</dbReference>
<dbReference type="Pfam" id="PF07714">
    <property type="entry name" value="PK_Tyr_Ser-Thr"/>
    <property type="match status" value="1"/>
</dbReference>
<dbReference type="SMART" id="SM00220">
    <property type="entry name" value="S_TKc"/>
    <property type="match status" value="1"/>
</dbReference>
<dbReference type="SUPFAM" id="SSF52058">
    <property type="entry name" value="L domain-like"/>
    <property type="match status" value="1"/>
</dbReference>
<dbReference type="SUPFAM" id="SSF56112">
    <property type="entry name" value="Protein kinase-like (PK-like)"/>
    <property type="match status" value="1"/>
</dbReference>
<dbReference type="PROSITE" id="PS00107">
    <property type="entry name" value="PROTEIN_KINASE_ATP"/>
    <property type="match status" value="1"/>
</dbReference>
<dbReference type="PROSITE" id="PS50011">
    <property type="entry name" value="PROTEIN_KINASE_DOM"/>
    <property type="match status" value="1"/>
</dbReference>
<dbReference type="PROSITE" id="PS00108">
    <property type="entry name" value="PROTEIN_KINASE_ST"/>
    <property type="match status" value="1"/>
</dbReference>
<evidence type="ECO:0000250" key="1">
    <source>
        <dbReference type="UniProtKB" id="Q94AG2"/>
    </source>
</evidence>
<evidence type="ECO:0000250" key="2">
    <source>
        <dbReference type="UniProtKB" id="Q94F62"/>
    </source>
</evidence>
<evidence type="ECO:0000250" key="3">
    <source>
        <dbReference type="UniProtKB" id="Q9LSI9"/>
    </source>
</evidence>
<evidence type="ECO:0000255" key="4"/>
<evidence type="ECO:0000255" key="5">
    <source>
        <dbReference type="PROSITE-ProRule" id="PRU00159"/>
    </source>
</evidence>
<evidence type="ECO:0000255" key="6">
    <source>
        <dbReference type="PROSITE-ProRule" id="PRU10027"/>
    </source>
</evidence>
<evidence type="ECO:0000305" key="7"/>
<sequence length="614" mass="68206">MEISLMKFLFLGIWVYYYSVLDSVSAMDSLLSPKGVNYEVAALMSVKNKMKDEKEVLSGWDINSVDPCTWNMVGCSSEGFVVSLEMASKGLSGILSTSIGELTHLHTLLLQNNQLTGPIPSELGQLSELETLDLSGNRFSGEIPASLGFLTHLNYLRLSRNLLSGQVPHLVAGLSGLSFLDLSFNNLSGPTPNISAKDYRIVGNAFLCGPASQELCSDATPVRNATGLSEKDNSKHHSLVLSFAFGIVVAFIISLMFLFFWVLWHRSRLSRSHVQQDYEFEIGHLKRFSFREIQTATSNFSPKNILGQGGFGMVYKGYLPNGTVVAVKRLKDPIYTGEVQFQTEVEMIGLAVHRNLLRLFGFCMTPEERMLVYPYMPNGSVADRLRDNYGEKPSLDWNRRISIALGAARGLVYLHEQCNPKIIHRDVKAANILLDESFEAIVGDFGLAKLLDQRDSHVTTAVRGTIGHIAPEYLSTGQSSEKTDVFGFGVLILELITGHKMIDQGNGQVRKGMILSWVRTLKAEKRFAEMVDRDLKGEFDDLVLEEVVELALLCTQPHPNLRPRMSQVLKVLEGLVEQCEGGYEARAPSVSRNYSNGHEEQSFIIEAIELSGPR</sequence>
<comment type="catalytic activity">
    <reaction>
        <text>L-seryl-[protein] + ATP = O-phospho-L-seryl-[protein] + ADP + H(+)</text>
        <dbReference type="Rhea" id="RHEA:17989"/>
        <dbReference type="Rhea" id="RHEA-COMP:9863"/>
        <dbReference type="Rhea" id="RHEA-COMP:11604"/>
        <dbReference type="ChEBI" id="CHEBI:15378"/>
        <dbReference type="ChEBI" id="CHEBI:29999"/>
        <dbReference type="ChEBI" id="CHEBI:30616"/>
        <dbReference type="ChEBI" id="CHEBI:83421"/>
        <dbReference type="ChEBI" id="CHEBI:456216"/>
        <dbReference type="EC" id="2.7.11.1"/>
    </reaction>
</comment>
<comment type="catalytic activity">
    <reaction>
        <text>L-threonyl-[protein] + ATP = O-phospho-L-threonyl-[protein] + ADP + H(+)</text>
        <dbReference type="Rhea" id="RHEA:46608"/>
        <dbReference type="Rhea" id="RHEA-COMP:11060"/>
        <dbReference type="Rhea" id="RHEA-COMP:11605"/>
        <dbReference type="ChEBI" id="CHEBI:15378"/>
        <dbReference type="ChEBI" id="CHEBI:30013"/>
        <dbReference type="ChEBI" id="CHEBI:30616"/>
        <dbReference type="ChEBI" id="CHEBI:61977"/>
        <dbReference type="ChEBI" id="CHEBI:456216"/>
        <dbReference type="EC" id="2.7.11.1"/>
    </reaction>
</comment>
<comment type="interaction">
    <interactant intactId="EBI-16964970">
        <id>C0LGU5</id>
    </interactant>
    <interactant intactId="EBI-20657508">
        <id>A0A178WK49</id>
        <label>At1g62950</label>
    </interactant>
    <organismsDiffer>false</organismsDiffer>
    <experiments>3</experiments>
</comment>
<comment type="interaction">
    <interactant intactId="EBI-16964970">
        <id>C0LGU5</id>
    </interactant>
    <interactant intactId="EBI-20657656">
        <id>C0LGH8</id>
        <label>At1g63430</label>
    </interactant>
    <organismsDiffer>false</organismsDiffer>
    <experiments>3</experiments>
</comment>
<comment type="interaction">
    <interactant intactId="EBI-16964970">
        <id>C0LGU5</id>
    </interactant>
    <interactant intactId="EBI-20661274">
        <id>A0A178UAF6</id>
        <label>AXX17_At5g67350</label>
    </interactant>
    <organismsDiffer>false</organismsDiffer>
    <experiments>2</experiments>
</comment>
<comment type="interaction">
    <interactant intactId="EBI-16964970">
        <id>C0LGU5</id>
    </interactant>
    <interactant intactId="EBI-20652801">
        <id>C0LGN2</id>
        <label>LRR-RLK</label>
    </interactant>
    <organismsDiffer>false</organismsDiffer>
    <experiments>3</experiments>
</comment>
<comment type="interaction">
    <interactant intactId="EBI-16964970">
        <id>C0LGU5</id>
    </interactant>
    <interactant intactId="EBI-20662530">
        <id>O22178</id>
        <label>LRR-RLK</label>
    </interactant>
    <organismsDiffer>false</organismsDiffer>
    <experiments>2</experiments>
</comment>
<comment type="interaction">
    <interactant intactId="EBI-16964970">
        <id>C0LGU5</id>
    </interactant>
    <interactant intactId="EBI-20652612">
        <id>Q9FZ59</id>
        <label>PEPR2</label>
    </interactant>
    <organismsDiffer>false</organismsDiffer>
    <experiments>3</experiments>
</comment>
<comment type="interaction">
    <interactant intactId="EBI-16964970">
        <id>C0LGU5</id>
    </interactant>
    <interactant intactId="EBI-16902047">
        <id>Q9FN37</id>
        <label>PSKR2</label>
    </interactant>
    <organismsDiffer>false</organismsDiffer>
    <experiments>3</experiments>
</comment>
<comment type="interaction">
    <interactant intactId="EBI-16964970">
        <id>C0LGU5</id>
    </interactant>
    <interactant intactId="EBI-16954301">
        <id>Q9C8M9</id>
        <label>SRF6</label>
    </interactant>
    <organismsDiffer>false</organismsDiffer>
    <experiments>3</experiments>
</comment>
<comment type="interaction">
    <interactant intactId="EBI-16964970">
        <id>C0LGU5</id>
    </interactant>
    <interactant intactId="EBI-2023970">
        <id>P43298</id>
        <label>TMK1</label>
    </interactant>
    <organismsDiffer>false</organismsDiffer>
    <experiments>3</experiments>
</comment>
<comment type="interaction">
    <interactant intactId="EBI-16964970">
        <id>C0LGU5</id>
    </interactant>
    <interactant intactId="EBI-20658163">
        <id>Q8GY50</id>
        <label>VRLK1</label>
    </interactant>
    <organismsDiffer>false</organismsDiffer>
    <experiments>3</experiments>
</comment>
<comment type="subcellular location">
    <subcellularLocation>
        <location evidence="7">Membrane</location>
        <topology evidence="7">Single-pass type I membrane protein</topology>
    </subcellularLocation>
</comment>
<comment type="similarity">
    <text evidence="5">Belongs to the protein kinase superfamily. Ser/Thr protein kinase family.</text>
</comment>
<comment type="sequence caution" evidence="7">
    <conflict type="erroneous gene model prediction">
        <sequence resource="EMBL-CDS" id="BAB09221"/>
    </conflict>
</comment>
<name>Y5457_ARATH</name>
<proteinExistence type="evidence at protein level"/>
<reference key="1">
    <citation type="journal article" date="1998" name="DNA Res.">
        <title>Structural analysis of Arabidopsis thaliana chromosome 5. VI. Sequence features of the regions of 1,367,185 bp covered by 19 physically assigned P1 and TAC clones.</title>
        <authorList>
            <person name="Kotani H."/>
            <person name="Nakamura Y."/>
            <person name="Sato S."/>
            <person name="Asamizu E."/>
            <person name="Kaneko T."/>
            <person name="Miyajima N."/>
            <person name="Tabata S."/>
        </authorList>
    </citation>
    <scope>NUCLEOTIDE SEQUENCE [LARGE SCALE GENOMIC DNA]</scope>
    <source>
        <strain>cv. Columbia</strain>
    </source>
</reference>
<reference key="2">
    <citation type="journal article" date="2017" name="Plant J.">
        <title>Araport11: a complete reannotation of the Arabidopsis thaliana reference genome.</title>
        <authorList>
            <person name="Cheng C.Y."/>
            <person name="Krishnakumar V."/>
            <person name="Chan A.P."/>
            <person name="Thibaud-Nissen F."/>
            <person name="Schobel S."/>
            <person name="Town C.D."/>
        </authorList>
    </citation>
    <scope>GENOME REANNOTATION</scope>
    <source>
        <strain>cv. Columbia</strain>
    </source>
</reference>
<reference key="3">
    <citation type="journal article" date="2010" name="BMC Genomics">
        <title>Genome-wide cloning and sequence analysis of leucine-rich repeat receptor-like protein kinase genes in Arabidopsis thaliana.</title>
        <authorList>
            <person name="Gou X."/>
            <person name="He K."/>
            <person name="Yang H."/>
            <person name="Yuan T."/>
            <person name="Lin H."/>
            <person name="Clouse S.D."/>
            <person name="Li J."/>
        </authorList>
    </citation>
    <scope>NUCLEOTIDE SEQUENCE [LARGE SCALE MRNA]</scope>
    <source>
        <strain>cv. Columbia</strain>
    </source>
</reference>
<feature type="signal peptide" evidence="4">
    <location>
        <begin position="1"/>
        <end position="26"/>
    </location>
</feature>
<feature type="chain" id="PRO_0000387563" description="Probable LRR receptor-like serine/threonine-protein kinase At5g45780">
    <location>
        <begin position="27"/>
        <end position="614"/>
    </location>
</feature>
<feature type="topological domain" description="Extracellular" evidence="4">
    <location>
        <begin position="27"/>
        <end position="242"/>
    </location>
</feature>
<feature type="transmembrane region" description="Helical" evidence="4">
    <location>
        <begin position="243"/>
        <end position="263"/>
    </location>
</feature>
<feature type="topological domain" description="Cytoplasmic" evidence="4">
    <location>
        <begin position="264"/>
        <end position="614"/>
    </location>
</feature>
<feature type="repeat" description="LRR 1">
    <location>
        <begin position="104"/>
        <end position="126"/>
    </location>
</feature>
<feature type="repeat" description="LRR 2">
    <location>
        <begin position="128"/>
        <end position="151"/>
    </location>
</feature>
<feature type="repeat" description="LRR 3">
    <location>
        <begin position="152"/>
        <end position="174"/>
    </location>
</feature>
<feature type="repeat" description="LRR 4">
    <location>
        <begin position="176"/>
        <end position="197"/>
    </location>
</feature>
<feature type="domain" description="Protein kinase" evidence="5">
    <location>
        <begin position="300"/>
        <end position="576"/>
    </location>
</feature>
<feature type="active site" description="Proton acceptor" evidence="5 6">
    <location>
        <position position="426"/>
    </location>
</feature>
<feature type="binding site" evidence="5">
    <location>
        <begin position="306"/>
        <end position="314"/>
    </location>
    <ligand>
        <name>ATP</name>
        <dbReference type="ChEBI" id="CHEBI:30616"/>
    </ligand>
</feature>
<feature type="binding site" evidence="5">
    <location>
        <position position="328"/>
    </location>
    <ligand>
        <name>ATP</name>
        <dbReference type="ChEBI" id="CHEBI:30616"/>
    </ligand>
</feature>
<feature type="modified residue" description="Phosphothreonine" evidence="3">
    <location>
        <position position="297"/>
    </location>
</feature>
<feature type="modified residue" description="Phosphothreonine" evidence="2">
    <location>
        <position position="323"/>
    </location>
</feature>
<feature type="modified residue" description="Phosphoserine" evidence="1">
    <location>
        <position position="380"/>
    </location>
</feature>
<feature type="modified residue" description="Phosphothreonine" evidence="2">
    <location>
        <position position="459"/>
    </location>
</feature>
<feature type="modified residue" description="Phosphothreonine" evidence="2">
    <location>
        <position position="460"/>
    </location>
</feature>
<feature type="modified residue" description="Phosphothreonine" evidence="2">
    <location>
        <position position="465"/>
    </location>
</feature>
<feature type="modified residue" description="Phosphotyrosine" evidence="1">
    <location>
        <position position="473"/>
    </location>
</feature>
<feature type="modified residue" description="Phosphoserine" evidence="1">
    <location>
        <position position="475"/>
    </location>
</feature>
<feature type="modified residue" description="Phosphothreonine" evidence="1">
    <location>
        <position position="476"/>
    </location>
</feature>
<feature type="modified residue" description="Phosphoserine" evidence="1">
    <location>
        <position position="480"/>
    </location>
</feature>
<feature type="modified residue" description="Phosphothreonine" evidence="1">
    <location>
        <position position="555"/>
    </location>
</feature>
<feature type="glycosylation site" description="N-linked (GlcNAc...) asparagine" evidence="4">
    <location>
        <position position="186"/>
    </location>
</feature>
<feature type="glycosylation site" description="N-linked (GlcNAc...) asparagine" evidence="4">
    <location>
        <position position="193"/>
    </location>
</feature>
<feature type="glycosylation site" description="N-linked (GlcNAc...) asparagine" evidence="4">
    <location>
        <position position="224"/>
    </location>
</feature>
<protein>
    <recommendedName>
        <fullName>Probable LRR receptor-like serine/threonine-protein kinase At5g45780</fullName>
        <ecNumber>2.7.11.1</ecNumber>
    </recommendedName>
</protein>
<keyword id="KW-0067">ATP-binding</keyword>
<keyword id="KW-0325">Glycoprotein</keyword>
<keyword id="KW-0418">Kinase</keyword>
<keyword id="KW-0433">Leucine-rich repeat</keyword>
<keyword id="KW-0472">Membrane</keyword>
<keyword id="KW-0547">Nucleotide-binding</keyword>
<keyword id="KW-0597">Phosphoprotein</keyword>
<keyword id="KW-0675">Receptor</keyword>
<keyword id="KW-1185">Reference proteome</keyword>
<keyword id="KW-0677">Repeat</keyword>
<keyword id="KW-0723">Serine/threonine-protein kinase</keyword>
<keyword id="KW-0732">Signal</keyword>
<keyword id="KW-0808">Transferase</keyword>
<keyword id="KW-0812">Transmembrane</keyword>
<keyword id="KW-1133">Transmembrane helix</keyword>
<accession>C0LGU5</accession>
<accession>Q9FK65</accession>